<dbReference type="EC" id="2.7.1.23" evidence="1"/>
<dbReference type="EMBL" id="AL954747">
    <property type="protein sequence ID" value="CAD85389.1"/>
    <property type="molecule type" value="Genomic_DNA"/>
</dbReference>
<dbReference type="RefSeq" id="WP_011112046.1">
    <property type="nucleotide sequence ID" value="NC_004757.1"/>
</dbReference>
<dbReference type="SMR" id="Q82UK6"/>
<dbReference type="STRING" id="228410.NE1478"/>
<dbReference type="GeneID" id="87104652"/>
<dbReference type="KEGG" id="neu:NE1478"/>
<dbReference type="eggNOG" id="COG0061">
    <property type="taxonomic scope" value="Bacteria"/>
</dbReference>
<dbReference type="HOGENOM" id="CLU_008831_0_1_4"/>
<dbReference type="OrthoDB" id="9774737at2"/>
<dbReference type="PhylomeDB" id="Q82UK6"/>
<dbReference type="Proteomes" id="UP000001416">
    <property type="component" value="Chromosome"/>
</dbReference>
<dbReference type="GO" id="GO:0005737">
    <property type="term" value="C:cytoplasm"/>
    <property type="evidence" value="ECO:0007669"/>
    <property type="project" value="UniProtKB-SubCell"/>
</dbReference>
<dbReference type="GO" id="GO:0005524">
    <property type="term" value="F:ATP binding"/>
    <property type="evidence" value="ECO:0007669"/>
    <property type="project" value="UniProtKB-KW"/>
</dbReference>
<dbReference type="GO" id="GO:0046872">
    <property type="term" value="F:metal ion binding"/>
    <property type="evidence" value="ECO:0007669"/>
    <property type="project" value="UniProtKB-UniRule"/>
</dbReference>
<dbReference type="GO" id="GO:0051287">
    <property type="term" value="F:NAD binding"/>
    <property type="evidence" value="ECO:0007669"/>
    <property type="project" value="UniProtKB-ARBA"/>
</dbReference>
<dbReference type="GO" id="GO:0003951">
    <property type="term" value="F:NAD+ kinase activity"/>
    <property type="evidence" value="ECO:0007669"/>
    <property type="project" value="UniProtKB-UniRule"/>
</dbReference>
<dbReference type="GO" id="GO:0019674">
    <property type="term" value="P:NAD metabolic process"/>
    <property type="evidence" value="ECO:0007669"/>
    <property type="project" value="InterPro"/>
</dbReference>
<dbReference type="GO" id="GO:0006741">
    <property type="term" value="P:NADP biosynthetic process"/>
    <property type="evidence" value="ECO:0007669"/>
    <property type="project" value="UniProtKB-UniRule"/>
</dbReference>
<dbReference type="Gene3D" id="3.40.50.10330">
    <property type="entry name" value="Probable inorganic polyphosphate/atp-NAD kinase, domain 1"/>
    <property type="match status" value="1"/>
</dbReference>
<dbReference type="Gene3D" id="2.60.200.30">
    <property type="entry name" value="Probable inorganic polyphosphate/atp-NAD kinase, domain 2"/>
    <property type="match status" value="1"/>
</dbReference>
<dbReference type="HAMAP" id="MF_00361">
    <property type="entry name" value="NAD_kinase"/>
    <property type="match status" value="1"/>
</dbReference>
<dbReference type="InterPro" id="IPR017438">
    <property type="entry name" value="ATP-NAD_kinase_N"/>
</dbReference>
<dbReference type="InterPro" id="IPR017437">
    <property type="entry name" value="ATP-NAD_kinase_PpnK-typ_C"/>
</dbReference>
<dbReference type="InterPro" id="IPR016064">
    <property type="entry name" value="NAD/diacylglycerol_kinase_sf"/>
</dbReference>
<dbReference type="InterPro" id="IPR002504">
    <property type="entry name" value="NADK"/>
</dbReference>
<dbReference type="NCBIfam" id="NF002306">
    <property type="entry name" value="PRK01231.1"/>
    <property type="match status" value="1"/>
</dbReference>
<dbReference type="NCBIfam" id="NF002561">
    <property type="entry name" value="PRK02155.1"/>
    <property type="match status" value="1"/>
</dbReference>
<dbReference type="PANTHER" id="PTHR20275">
    <property type="entry name" value="NAD KINASE"/>
    <property type="match status" value="1"/>
</dbReference>
<dbReference type="PANTHER" id="PTHR20275:SF0">
    <property type="entry name" value="NAD KINASE"/>
    <property type="match status" value="1"/>
</dbReference>
<dbReference type="Pfam" id="PF01513">
    <property type="entry name" value="NAD_kinase"/>
    <property type="match status" value="1"/>
</dbReference>
<dbReference type="Pfam" id="PF20143">
    <property type="entry name" value="NAD_kinase_C"/>
    <property type="match status" value="1"/>
</dbReference>
<dbReference type="SUPFAM" id="SSF111331">
    <property type="entry name" value="NAD kinase/diacylglycerol kinase-like"/>
    <property type="match status" value="1"/>
</dbReference>
<keyword id="KW-0067">ATP-binding</keyword>
<keyword id="KW-0963">Cytoplasm</keyword>
<keyword id="KW-0418">Kinase</keyword>
<keyword id="KW-0520">NAD</keyword>
<keyword id="KW-0521">NADP</keyword>
<keyword id="KW-0547">Nucleotide-binding</keyword>
<keyword id="KW-1185">Reference proteome</keyword>
<keyword id="KW-0808">Transferase</keyword>
<evidence type="ECO:0000255" key="1">
    <source>
        <dbReference type="HAMAP-Rule" id="MF_00361"/>
    </source>
</evidence>
<comment type="function">
    <text evidence="1">Involved in the regulation of the intracellular balance of NAD and NADP, and is a key enzyme in the biosynthesis of NADP. Catalyzes specifically the phosphorylation on 2'-hydroxyl of the adenosine moiety of NAD to yield NADP.</text>
</comment>
<comment type="catalytic activity">
    <reaction evidence="1">
        <text>NAD(+) + ATP = ADP + NADP(+) + H(+)</text>
        <dbReference type="Rhea" id="RHEA:18629"/>
        <dbReference type="ChEBI" id="CHEBI:15378"/>
        <dbReference type="ChEBI" id="CHEBI:30616"/>
        <dbReference type="ChEBI" id="CHEBI:57540"/>
        <dbReference type="ChEBI" id="CHEBI:58349"/>
        <dbReference type="ChEBI" id="CHEBI:456216"/>
        <dbReference type="EC" id="2.7.1.23"/>
    </reaction>
</comment>
<comment type="cofactor">
    <cofactor evidence="1">
        <name>a divalent metal cation</name>
        <dbReference type="ChEBI" id="CHEBI:60240"/>
    </cofactor>
</comment>
<comment type="subcellular location">
    <subcellularLocation>
        <location evidence="1">Cytoplasm</location>
    </subcellularLocation>
</comment>
<comment type="similarity">
    <text evidence="1">Belongs to the NAD kinase family.</text>
</comment>
<protein>
    <recommendedName>
        <fullName evidence="1">NAD kinase</fullName>
        <ecNumber evidence="1">2.7.1.23</ecNumber>
    </recommendedName>
    <alternativeName>
        <fullName evidence="1">ATP-dependent NAD kinase</fullName>
    </alternativeName>
</protein>
<feature type="chain" id="PRO_0000120641" description="NAD kinase">
    <location>
        <begin position="1"/>
        <end position="296"/>
    </location>
</feature>
<feature type="active site" description="Proton acceptor" evidence="1">
    <location>
        <position position="74"/>
    </location>
</feature>
<feature type="binding site" evidence="1">
    <location>
        <begin position="74"/>
        <end position="75"/>
    </location>
    <ligand>
        <name>NAD(+)</name>
        <dbReference type="ChEBI" id="CHEBI:57540"/>
    </ligand>
</feature>
<feature type="binding site" evidence="1">
    <location>
        <begin position="148"/>
        <end position="149"/>
    </location>
    <ligand>
        <name>NAD(+)</name>
        <dbReference type="ChEBI" id="CHEBI:57540"/>
    </ligand>
</feature>
<feature type="binding site" evidence="1">
    <location>
        <position position="176"/>
    </location>
    <ligand>
        <name>NAD(+)</name>
        <dbReference type="ChEBI" id="CHEBI:57540"/>
    </ligand>
</feature>
<feature type="binding site" evidence="1">
    <location>
        <position position="178"/>
    </location>
    <ligand>
        <name>NAD(+)</name>
        <dbReference type="ChEBI" id="CHEBI:57540"/>
    </ligand>
</feature>
<feature type="binding site" evidence="1">
    <location>
        <begin position="189"/>
        <end position="194"/>
    </location>
    <ligand>
        <name>NAD(+)</name>
        <dbReference type="ChEBI" id="CHEBI:57540"/>
    </ligand>
</feature>
<gene>
    <name evidence="1" type="primary">nadK</name>
    <name type="ordered locus">NE1478</name>
</gene>
<reference key="1">
    <citation type="journal article" date="2003" name="J. Bacteriol.">
        <title>Complete genome sequence of the ammonia-oxidizing bacterium and obligate chemolithoautotroph Nitrosomonas europaea.</title>
        <authorList>
            <person name="Chain P."/>
            <person name="Lamerdin J.E."/>
            <person name="Larimer F.W."/>
            <person name="Regala W."/>
            <person name="Lao V."/>
            <person name="Land M.L."/>
            <person name="Hauser L."/>
            <person name="Hooper A.B."/>
            <person name="Klotz M.G."/>
            <person name="Norton J."/>
            <person name="Sayavedra-Soto L.A."/>
            <person name="Arciero D.M."/>
            <person name="Hommes N.G."/>
            <person name="Whittaker M.M."/>
            <person name="Arp D.J."/>
        </authorList>
    </citation>
    <scope>NUCLEOTIDE SEQUENCE [LARGE SCALE GENOMIC DNA]</scope>
    <source>
        <strain>ATCC 19718 / CIP 103999 / KCTC 2705 / NBRC 14298</strain>
    </source>
</reference>
<accession>Q82UK6</accession>
<name>NADK_NITEU</name>
<sequence>MDSALFKTIALIGKHKNPDIVIPLLSLAEYLTDRGISVVLDSLTAAHISNSRYPILTLEEIGKQADLAIVLGGDGTMLNIARALVPFSVPLIGINQGRLGFLTDLTADTMHETLNDMLAGQFVVENRMLLTVEVTRNGESVFKELAFNDVVLHRGISSGMIELEVHINGEYVYSLRSDGLIIATPTGSTAYALSSGGPILHPGLNLMTLVPICPHTLSNRPIVIGADATIEIKVHFTTEIKIYTDSHSWFDLSEHDRVFIQRCPETIKLLHPVHHSYYRMLREKLGWSGILQKNSR</sequence>
<organism>
    <name type="scientific">Nitrosomonas europaea (strain ATCC 19718 / CIP 103999 / KCTC 2705 / NBRC 14298)</name>
    <dbReference type="NCBI Taxonomy" id="228410"/>
    <lineage>
        <taxon>Bacteria</taxon>
        <taxon>Pseudomonadati</taxon>
        <taxon>Pseudomonadota</taxon>
        <taxon>Betaproteobacteria</taxon>
        <taxon>Nitrosomonadales</taxon>
        <taxon>Nitrosomonadaceae</taxon>
        <taxon>Nitrosomonas</taxon>
    </lineage>
</organism>
<proteinExistence type="inferred from homology"/>